<gene>
    <name type="primary">ppp4r2-b</name>
</gene>
<accession>Q6DCQ0</accession>
<proteinExistence type="evidence at transcript level"/>
<name>P4R2B_XENLA</name>
<reference key="1">
    <citation type="submission" date="2004-07" db="EMBL/GenBank/DDBJ databases">
        <authorList>
            <consortium name="NIH - Xenopus Gene Collection (XGC) project"/>
        </authorList>
    </citation>
    <scope>NUCLEOTIDE SEQUENCE [LARGE SCALE MRNA]</scope>
    <source>
        <tissue>Embryo</tissue>
    </source>
</reference>
<comment type="function">
    <text evidence="1">Regulatory subunit of serine/threonine-protein phosphatase 4 (PP4).</text>
</comment>
<comment type="subunit">
    <text evidence="1">Serine/threonine-protein phosphatase 4 (PP4) occurs in different assemblies of the catalytic and one or more regulatory subunits.</text>
</comment>
<comment type="similarity">
    <text evidence="3">Belongs to the PPP4R2 family.</text>
</comment>
<feature type="chain" id="PRO_0000299373" description="Serine/threonine-protein phosphatase 4 regulatory subunit 2-B">
    <location>
        <begin position="1"/>
        <end position="398"/>
    </location>
</feature>
<feature type="region of interest" description="Disordered" evidence="2">
    <location>
        <begin position="138"/>
        <end position="398"/>
    </location>
</feature>
<feature type="compositionally biased region" description="Polar residues" evidence="2">
    <location>
        <begin position="139"/>
        <end position="149"/>
    </location>
</feature>
<feature type="compositionally biased region" description="Polar residues" evidence="2">
    <location>
        <begin position="156"/>
        <end position="170"/>
    </location>
</feature>
<feature type="compositionally biased region" description="Polar residues" evidence="2">
    <location>
        <begin position="183"/>
        <end position="193"/>
    </location>
</feature>
<feature type="compositionally biased region" description="Basic and acidic residues" evidence="2">
    <location>
        <begin position="197"/>
        <end position="211"/>
    </location>
</feature>
<feature type="compositionally biased region" description="Polar residues" evidence="2">
    <location>
        <begin position="278"/>
        <end position="294"/>
    </location>
</feature>
<feature type="compositionally biased region" description="Low complexity" evidence="2">
    <location>
        <begin position="338"/>
        <end position="366"/>
    </location>
</feature>
<dbReference type="EMBL" id="BC077952">
    <property type="protein sequence ID" value="AAH77952.1"/>
    <property type="molecule type" value="mRNA"/>
</dbReference>
<dbReference type="RefSeq" id="NP_001087055.1">
    <property type="nucleotide sequence ID" value="NM_001093586.1"/>
</dbReference>
<dbReference type="DNASU" id="446890"/>
<dbReference type="GeneID" id="446890"/>
<dbReference type="KEGG" id="xla:446890"/>
<dbReference type="AGR" id="Xenbase:XB-GENE-6255088"/>
<dbReference type="CTD" id="446890"/>
<dbReference type="Xenbase" id="XB-GENE-6255088">
    <property type="gene designation" value="ppp4r2.S"/>
</dbReference>
<dbReference type="OMA" id="PMEDTPV"/>
<dbReference type="OrthoDB" id="341898at2759"/>
<dbReference type="Proteomes" id="UP000186698">
    <property type="component" value="Chromosome 4S"/>
</dbReference>
<dbReference type="Bgee" id="446890">
    <property type="expression patterns" value="Expressed in blastula and 19 other cell types or tissues"/>
</dbReference>
<dbReference type="GO" id="GO:0005737">
    <property type="term" value="C:cytoplasm"/>
    <property type="evidence" value="ECO:0000318"/>
    <property type="project" value="GO_Central"/>
</dbReference>
<dbReference type="GO" id="GO:0005634">
    <property type="term" value="C:nucleus"/>
    <property type="evidence" value="ECO:0000318"/>
    <property type="project" value="GO_Central"/>
</dbReference>
<dbReference type="GO" id="GO:0030289">
    <property type="term" value="C:protein phosphatase 4 complex"/>
    <property type="evidence" value="ECO:0000318"/>
    <property type="project" value="GO_Central"/>
</dbReference>
<dbReference type="GO" id="GO:0019888">
    <property type="term" value="F:protein phosphatase regulator activity"/>
    <property type="evidence" value="ECO:0000318"/>
    <property type="project" value="GO_Central"/>
</dbReference>
<dbReference type="InterPro" id="IPR015267">
    <property type="entry name" value="PPP4R2"/>
</dbReference>
<dbReference type="PANTHER" id="PTHR16487">
    <property type="entry name" value="PPP4R2-RELATED PROTEIN"/>
    <property type="match status" value="1"/>
</dbReference>
<dbReference type="PANTHER" id="PTHR16487:SF0">
    <property type="entry name" value="PROTEIN PHOSPHATASE 4 REGULATORY SUBUNIT 2-RELATED"/>
    <property type="match status" value="1"/>
</dbReference>
<dbReference type="Pfam" id="PF09184">
    <property type="entry name" value="PPP4R2"/>
    <property type="match status" value="1"/>
</dbReference>
<evidence type="ECO:0000250" key="1"/>
<evidence type="ECO:0000256" key="2">
    <source>
        <dbReference type="SAM" id="MobiDB-lite"/>
    </source>
</evidence>
<evidence type="ECO:0000305" key="3"/>
<sequence length="398" mass="43957">MDVDRLQEALKDFEKRGKKDVSPELDQFLCHVAKTGETVVQWPQFKEYFLFKLEKVMDDFRTSAPEQRGPPNPNVEYIPFDEMKQRILKIVASFNGTPFTIQRLCELLTDPRRNYTGTDKFLRGVEKNIMVVSCVYPSSEKNTSPSLNRMNGVMFPSNSQSYTDRSNVNGPGTPRPTNRPKFTLSSPMNTNGLPDSMENKESDLQQKEKSLSDSAVFDDGSQATTPKNKHSAEDSVEAEEHEVKRLKFDTEEDEEAACANPDASSEVSTEMAEEAECASTSADKGKESCQTAQTADEESLMTASESTEVECNERDSETVSVSEESSEESHQMEESEQSESACSLNSEEPNSAAAAASTAGTDSSEGNIGIKSTEILSLSPMENSEEATNAPEEPMEQD</sequence>
<organism>
    <name type="scientific">Xenopus laevis</name>
    <name type="common">African clawed frog</name>
    <dbReference type="NCBI Taxonomy" id="8355"/>
    <lineage>
        <taxon>Eukaryota</taxon>
        <taxon>Metazoa</taxon>
        <taxon>Chordata</taxon>
        <taxon>Craniata</taxon>
        <taxon>Vertebrata</taxon>
        <taxon>Euteleostomi</taxon>
        <taxon>Amphibia</taxon>
        <taxon>Batrachia</taxon>
        <taxon>Anura</taxon>
        <taxon>Pipoidea</taxon>
        <taxon>Pipidae</taxon>
        <taxon>Xenopodinae</taxon>
        <taxon>Xenopus</taxon>
        <taxon>Xenopus</taxon>
    </lineage>
</organism>
<protein>
    <recommendedName>
        <fullName>Serine/threonine-protein phosphatase 4 regulatory subunit 2-B</fullName>
    </recommendedName>
</protein>
<keyword id="KW-1185">Reference proteome</keyword>